<dbReference type="EC" id="6.1.1.10" evidence="1"/>
<dbReference type="EMBL" id="AE005674">
    <property type="protein sequence ID" value="AAN43708.2"/>
    <property type="molecule type" value="Genomic_DNA"/>
</dbReference>
<dbReference type="EMBL" id="AE014073">
    <property type="protein sequence ID" value="AAP17531.1"/>
    <property type="molecule type" value="Genomic_DNA"/>
</dbReference>
<dbReference type="RefSeq" id="NP_708001.2">
    <property type="nucleotide sequence ID" value="NC_004337.2"/>
</dbReference>
<dbReference type="RefSeq" id="WP_005049047.1">
    <property type="nucleotide sequence ID" value="NZ_WPGW01000207.1"/>
</dbReference>
<dbReference type="SMR" id="Q83KH0"/>
<dbReference type="STRING" id="198214.SF2179"/>
<dbReference type="PaxDb" id="198214-SF2179"/>
<dbReference type="GeneID" id="1025333"/>
<dbReference type="KEGG" id="sfl:SF2179"/>
<dbReference type="KEGG" id="sfx:S2303"/>
<dbReference type="PATRIC" id="fig|198214.7.peg.2601"/>
<dbReference type="HOGENOM" id="CLU_009710_7_0_6"/>
<dbReference type="Proteomes" id="UP000001006">
    <property type="component" value="Chromosome"/>
</dbReference>
<dbReference type="Proteomes" id="UP000002673">
    <property type="component" value="Chromosome"/>
</dbReference>
<dbReference type="GO" id="GO:0005829">
    <property type="term" value="C:cytosol"/>
    <property type="evidence" value="ECO:0007669"/>
    <property type="project" value="TreeGrafter"/>
</dbReference>
<dbReference type="GO" id="GO:0005524">
    <property type="term" value="F:ATP binding"/>
    <property type="evidence" value="ECO:0007669"/>
    <property type="project" value="UniProtKB-UniRule"/>
</dbReference>
<dbReference type="GO" id="GO:0046872">
    <property type="term" value="F:metal ion binding"/>
    <property type="evidence" value="ECO:0007669"/>
    <property type="project" value="UniProtKB-KW"/>
</dbReference>
<dbReference type="GO" id="GO:0004825">
    <property type="term" value="F:methionine-tRNA ligase activity"/>
    <property type="evidence" value="ECO:0007669"/>
    <property type="project" value="UniProtKB-UniRule"/>
</dbReference>
<dbReference type="GO" id="GO:0000049">
    <property type="term" value="F:tRNA binding"/>
    <property type="evidence" value="ECO:0007669"/>
    <property type="project" value="UniProtKB-KW"/>
</dbReference>
<dbReference type="GO" id="GO:0006431">
    <property type="term" value="P:methionyl-tRNA aminoacylation"/>
    <property type="evidence" value="ECO:0007669"/>
    <property type="project" value="UniProtKB-UniRule"/>
</dbReference>
<dbReference type="CDD" id="cd07957">
    <property type="entry name" value="Anticodon_Ia_Met"/>
    <property type="match status" value="1"/>
</dbReference>
<dbReference type="CDD" id="cd00814">
    <property type="entry name" value="MetRS_core"/>
    <property type="match status" value="1"/>
</dbReference>
<dbReference type="CDD" id="cd02800">
    <property type="entry name" value="tRNA_bind_EcMetRS_like"/>
    <property type="match status" value="1"/>
</dbReference>
<dbReference type="FunFam" id="1.10.730.10:FF:000005">
    <property type="entry name" value="Methionine--tRNA ligase"/>
    <property type="match status" value="1"/>
</dbReference>
<dbReference type="FunFam" id="2.20.28.20:FF:000001">
    <property type="entry name" value="Methionine--tRNA ligase"/>
    <property type="match status" value="1"/>
</dbReference>
<dbReference type="FunFam" id="2.40.50.140:FF:000042">
    <property type="entry name" value="Methionine--tRNA ligase"/>
    <property type="match status" value="1"/>
</dbReference>
<dbReference type="Gene3D" id="3.40.50.620">
    <property type="entry name" value="HUPs"/>
    <property type="match status" value="1"/>
</dbReference>
<dbReference type="Gene3D" id="1.10.730.10">
    <property type="entry name" value="Isoleucyl-tRNA Synthetase, Domain 1"/>
    <property type="match status" value="1"/>
</dbReference>
<dbReference type="Gene3D" id="2.20.28.20">
    <property type="entry name" value="Methionyl-tRNA synthetase, Zn-domain"/>
    <property type="match status" value="1"/>
</dbReference>
<dbReference type="Gene3D" id="2.40.50.140">
    <property type="entry name" value="Nucleic acid-binding proteins"/>
    <property type="match status" value="1"/>
</dbReference>
<dbReference type="HAMAP" id="MF_00098">
    <property type="entry name" value="Met_tRNA_synth_type1"/>
    <property type="match status" value="1"/>
</dbReference>
<dbReference type="InterPro" id="IPR001412">
    <property type="entry name" value="aa-tRNA-synth_I_CS"/>
</dbReference>
<dbReference type="InterPro" id="IPR041872">
    <property type="entry name" value="Anticodon_Met"/>
</dbReference>
<dbReference type="InterPro" id="IPR004495">
    <property type="entry name" value="Met-tRNA-synth_bsu_C"/>
</dbReference>
<dbReference type="InterPro" id="IPR023458">
    <property type="entry name" value="Met-tRNA_ligase_1"/>
</dbReference>
<dbReference type="InterPro" id="IPR014758">
    <property type="entry name" value="Met-tRNA_synth"/>
</dbReference>
<dbReference type="InterPro" id="IPR015413">
    <property type="entry name" value="Methionyl/Leucyl_tRNA_Synth"/>
</dbReference>
<dbReference type="InterPro" id="IPR033911">
    <property type="entry name" value="MetRS_core"/>
</dbReference>
<dbReference type="InterPro" id="IPR029038">
    <property type="entry name" value="MetRS_Zn"/>
</dbReference>
<dbReference type="InterPro" id="IPR012340">
    <property type="entry name" value="NA-bd_OB-fold"/>
</dbReference>
<dbReference type="InterPro" id="IPR014729">
    <property type="entry name" value="Rossmann-like_a/b/a_fold"/>
</dbReference>
<dbReference type="InterPro" id="IPR002547">
    <property type="entry name" value="tRNA-bd_dom"/>
</dbReference>
<dbReference type="InterPro" id="IPR009080">
    <property type="entry name" value="tRNAsynth_Ia_anticodon-bd"/>
</dbReference>
<dbReference type="NCBIfam" id="TIGR00398">
    <property type="entry name" value="metG"/>
    <property type="match status" value="1"/>
</dbReference>
<dbReference type="NCBIfam" id="TIGR00399">
    <property type="entry name" value="metG_C_term"/>
    <property type="match status" value="1"/>
</dbReference>
<dbReference type="NCBIfam" id="NF001100">
    <property type="entry name" value="PRK00133.1"/>
    <property type="match status" value="1"/>
</dbReference>
<dbReference type="PANTHER" id="PTHR45765">
    <property type="entry name" value="METHIONINE--TRNA LIGASE"/>
    <property type="match status" value="1"/>
</dbReference>
<dbReference type="PANTHER" id="PTHR45765:SF1">
    <property type="entry name" value="METHIONINE--TRNA LIGASE, CYTOPLASMIC"/>
    <property type="match status" value="1"/>
</dbReference>
<dbReference type="Pfam" id="PF19303">
    <property type="entry name" value="Anticodon_3"/>
    <property type="match status" value="1"/>
</dbReference>
<dbReference type="Pfam" id="PF09334">
    <property type="entry name" value="tRNA-synt_1g"/>
    <property type="match status" value="1"/>
</dbReference>
<dbReference type="Pfam" id="PF01588">
    <property type="entry name" value="tRNA_bind"/>
    <property type="match status" value="1"/>
</dbReference>
<dbReference type="PRINTS" id="PR01041">
    <property type="entry name" value="TRNASYNTHMET"/>
</dbReference>
<dbReference type="SUPFAM" id="SSF47323">
    <property type="entry name" value="Anticodon-binding domain of a subclass of class I aminoacyl-tRNA synthetases"/>
    <property type="match status" value="1"/>
</dbReference>
<dbReference type="SUPFAM" id="SSF57770">
    <property type="entry name" value="Methionyl-tRNA synthetase (MetRS), Zn-domain"/>
    <property type="match status" value="1"/>
</dbReference>
<dbReference type="SUPFAM" id="SSF50249">
    <property type="entry name" value="Nucleic acid-binding proteins"/>
    <property type="match status" value="1"/>
</dbReference>
<dbReference type="SUPFAM" id="SSF52374">
    <property type="entry name" value="Nucleotidylyl transferase"/>
    <property type="match status" value="1"/>
</dbReference>
<dbReference type="PROSITE" id="PS00178">
    <property type="entry name" value="AA_TRNA_LIGASE_I"/>
    <property type="match status" value="1"/>
</dbReference>
<dbReference type="PROSITE" id="PS50886">
    <property type="entry name" value="TRBD"/>
    <property type="match status" value="1"/>
</dbReference>
<name>SYM_SHIFL</name>
<comment type="function">
    <text evidence="1">Is required not only for elongation of protein synthesis but also for the initiation of all mRNA translation through initiator tRNA(fMet) aminoacylation.</text>
</comment>
<comment type="catalytic activity">
    <reaction evidence="1">
        <text>tRNA(Met) + L-methionine + ATP = L-methionyl-tRNA(Met) + AMP + diphosphate</text>
        <dbReference type="Rhea" id="RHEA:13481"/>
        <dbReference type="Rhea" id="RHEA-COMP:9667"/>
        <dbReference type="Rhea" id="RHEA-COMP:9698"/>
        <dbReference type="ChEBI" id="CHEBI:30616"/>
        <dbReference type="ChEBI" id="CHEBI:33019"/>
        <dbReference type="ChEBI" id="CHEBI:57844"/>
        <dbReference type="ChEBI" id="CHEBI:78442"/>
        <dbReference type="ChEBI" id="CHEBI:78530"/>
        <dbReference type="ChEBI" id="CHEBI:456215"/>
        <dbReference type="EC" id="6.1.1.10"/>
    </reaction>
</comment>
<comment type="cofactor">
    <cofactor evidence="1">
        <name>Zn(2+)</name>
        <dbReference type="ChEBI" id="CHEBI:29105"/>
    </cofactor>
    <text evidence="1">Binds 1 zinc ion per subunit.</text>
</comment>
<comment type="subunit">
    <text evidence="1">Homodimer.</text>
</comment>
<comment type="subcellular location">
    <subcellularLocation>
        <location evidence="1">Cytoplasm</location>
    </subcellularLocation>
</comment>
<comment type="similarity">
    <text evidence="1">Belongs to the class-I aminoacyl-tRNA synthetase family. MetG type 1 subfamily.</text>
</comment>
<keyword id="KW-0030">Aminoacyl-tRNA synthetase</keyword>
<keyword id="KW-0067">ATP-binding</keyword>
<keyword id="KW-0963">Cytoplasm</keyword>
<keyword id="KW-0436">Ligase</keyword>
<keyword id="KW-0479">Metal-binding</keyword>
<keyword id="KW-0547">Nucleotide-binding</keyword>
<keyword id="KW-0648">Protein biosynthesis</keyword>
<keyword id="KW-1185">Reference proteome</keyword>
<keyword id="KW-0694">RNA-binding</keyword>
<keyword id="KW-0820">tRNA-binding</keyword>
<keyword id="KW-0862">Zinc</keyword>
<sequence length="677" mass="76302">MTQVAKKILVTCALPYANGSIHLGHMLEHIQADVWVRYQRMRGHEVNFICADDAHGTPIMLKAQQLGITPEQMIGEMSQEHQTDFAGFNISYDNYHSTHSEENRQLSELIYSRLKENGFIKNRTISQLYDPEKGMFLPDRFVKGTCPKCKSPDQYGDNCEVCGATYSPTELIEPKSVVSGATPVMRDSEHFFFDLPSFSEMLQAWTRSGALQEQVANKMQEWFESGLQQWDISRDAPYFGFEIPNAPGKYFYVWLDAPIGYMGSFKNLCDKRGDSVSFDEYWKKDSTAELYHFIGKDIVYFHSLFWPAMLEGSNFRKPTNLFVHGYVTVNGAKMSKSRGTFIKASTWLNHFDADSLRYYYTAKLSSRIDDIDLNLEDFVQRVNADIVNKVVNLASRNAGFINKRFDGVLASELADPELYKTFTDAAEVIGEAWESREFGKAVREIMALADLANRYVDEQAPWVVAKQEGRDADLQAICSMGINLFRVLMTYLKPVLPKLTERAEAFLNTELTWDGIQQPLLGHKVNPFKALYNRIDMKQVEALVEASKEEVKATTAPVTGPLADDPIQETITFDDFAKVDLRVALIENAEFVEGSDKLLRLTLDLGGEKRNVFSGIRSAYPDPQALIGRHTIMVANLAPRKMRFGISEGMVMAAGPGGKDIFLLSPDAGAKPGHQVK</sequence>
<proteinExistence type="inferred from homology"/>
<feature type="chain" id="PRO_0000139164" description="Methionine--tRNA ligase">
    <location>
        <begin position="1"/>
        <end position="677"/>
    </location>
</feature>
<feature type="domain" description="tRNA-binding" evidence="1">
    <location>
        <begin position="575"/>
        <end position="677"/>
    </location>
</feature>
<feature type="short sequence motif" description="'HIGH' region">
    <location>
        <begin position="15"/>
        <end position="25"/>
    </location>
</feature>
<feature type="short sequence motif" description="'KMSKS' region">
    <location>
        <begin position="333"/>
        <end position="337"/>
    </location>
</feature>
<feature type="binding site" evidence="1">
    <location>
        <position position="146"/>
    </location>
    <ligand>
        <name>Zn(2+)</name>
        <dbReference type="ChEBI" id="CHEBI:29105"/>
    </ligand>
</feature>
<feature type="binding site" evidence="1">
    <location>
        <position position="149"/>
    </location>
    <ligand>
        <name>Zn(2+)</name>
        <dbReference type="ChEBI" id="CHEBI:29105"/>
    </ligand>
</feature>
<feature type="binding site" evidence="1">
    <location>
        <position position="159"/>
    </location>
    <ligand>
        <name>Zn(2+)</name>
        <dbReference type="ChEBI" id="CHEBI:29105"/>
    </ligand>
</feature>
<feature type="binding site" evidence="1">
    <location>
        <position position="162"/>
    </location>
    <ligand>
        <name>Zn(2+)</name>
        <dbReference type="ChEBI" id="CHEBI:29105"/>
    </ligand>
</feature>
<feature type="binding site" evidence="1">
    <location>
        <position position="336"/>
    </location>
    <ligand>
        <name>ATP</name>
        <dbReference type="ChEBI" id="CHEBI:30616"/>
    </ligand>
</feature>
<gene>
    <name evidence="1" type="primary">metG</name>
    <name type="ordered locus">SF2179</name>
    <name type="ordered locus">S2303</name>
</gene>
<accession>Q83KH0</accession>
<accession>Q7UCA3</accession>
<protein>
    <recommendedName>
        <fullName evidence="1">Methionine--tRNA ligase</fullName>
        <ecNumber evidence="1">6.1.1.10</ecNumber>
    </recommendedName>
    <alternativeName>
        <fullName evidence="1">Methionyl-tRNA synthetase</fullName>
        <shortName evidence="1">MetRS</shortName>
    </alternativeName>
</protein>
<evidence type="ECO:0000255" key="1">
    <source>
        <dbReference type="HAMAP-Rule" id="MF_00098"/>
    </source>
</evidence>
<reference key="1">
    <citation type="journal article" date="2002" name="Nucleic Acids Res.">
        <title>Genome sequence of Shigella flexneri 2a: insights into pathogenicity through comparison with genomes of Escherichia coli K12 and O157.</title>
        <authorList>
            <person name="Jin Q."/>
            <person name="Yuan Z."/>
            <person name="Xu J."/>
            <person name="Wang Y."/>
            <person name="Shen Y."/>
            <person name="Lu W."/>
            <person name="Wang J."/>
            <person name="Liu H."/>
            <person name="Yang J."/>
            <person name="Yang F."/>
            <person name="Zhang X."/>
            <person name="Zhang J."/>
            <person name="Yang G."/>
            <person name="Wu H."/>
            <person name="Qu D."/>
            <person name="Dong J."/>
            <person name="Sun L."/>
            <person name="Xue Y."/>
            <person name="Zhao A."/>
            <person name="Gao Y."/>
            <person name="Zhu J."/>
            <person name="Kan B."/>
            <person name="Ding K."/>
            <person name="Chen S."/>
            <person name="Cheng H."/>
            <person name="Yao Z."/>
            <person name="He B."/>
            <person name="Chen R."/>
            <person name="Ma D."/>
            <person name="Qiang B."/>
            <person name="Wen Y."/>
            <person name="Hou Y."/>
            <person name="Yu J."/>
        </authorList>
    </citation>
    <scope>NUCLEOTIDE SEQUENCE [LARGE SCALE GENOMIC DNA]</scope>
    <source>
        <strain>301 / Serotype 2a</strain>
    </source>
</reference>
<reference key="2">
    <citation type="journal article" date="2003" name="Infect. Immun.">
        <title>Complete genome sequence and comparative genomics of Shigella flexneri serotype 2a strain 2457T.</title>
        <authorList>
            <person name="Wei J."/>
            <person name="Goldberg M.B."/>
            <person name="Burland V."/>
            <person name="Venkatesan M.M."/>
            <person name="Deng W."/>
            <person name="Fournier G."/>
            <person name="Mayhew G.F."/>
            <person name="Plunkett G. III"/>
            <person name="Rose D.J."/>
            <person name="Darling A."/>
            <person name="Mau B."/>
            <person name="Perna N.T."/>
            <person name="Payne S.M."/>
            <person name="Runyen-Janecky L.J."/>
            <person name="Zhou S."/>
            <person name="Schwartz D.C."/>
            <person name="Blattner F.R."/>
        </authorList>
    </citation>
    <scope>NUCLEOTIDE SEQUENCE [LARGE SCALE GENOMIC DNA]</scope>
    <source>
        <strain>ATCC 700930 / 2457T / Serotype 2a</strain>
    </source>
</reference>
<organism>
    <name type="scientific">Shigella flexneri</name>
    <dbReference type="NCBI Taxonomy" id="623"/>
    <lineage>
        <taxon>Bacteria</taxon>
        <taxon>Pseudomonadati</taxon>
        <taxon>Pseudomonadota</taxon>
        <taxon>Gammaproteobacteria</taxon>
        <taxon>Enterobacterales</taxon>
        <taxon>Enterobacteriaceae</taxon>
        <taxon>Shigella</taxon>
    </lineage>
</organism>